<accession>P0C167</accession>
<organism>
    <name type="scientific">Centruroides limbatus</name>
    <name type="common">Bark scorpion</name>
    <dbReference type="NCBI Taxonomy" id="244936"/>
    <lineage>
        <taxon>Eukaryota</taxon>
        <taxon>Metazoa</taxon>
        <taxon>Ecdysozoa</taxon>
        <taxon>Arthropoda</taxon>
        <taxon>Chelicerata</taxon>
        <taxon>Arachnida</taxon>
        <taxon>Scorpiones</taxon>
        <taxon>Buthida</taxon>
        <taxon>Buthoidea</taxon>
        <taxon>Buthidae</taxon>
        <taxon>Centruroides</taxon>
    </lineage>
</organism>
<proteinExistence type="evidence at protein level"/>
<keyword id="KW-1221">Calcium-activated potassium channel impairing toxin</keyword>
<keyword id="KW-0903">Direct protein sequencing</keyword>
<keyword id="KW-1015">Disulfide bond</keyword>
<keyword id="KW-0872">Ion channel impairing toxin</keyword>
<keyword id="KW-0528">Neurotoxin</keyword>
<keyword id="KW-0632">Potassium channel impairing toxin</keyword>
<keyword id="KW-0964">Secreted</keyword>
<keyword id="KW-0800">Toxin</keyword>
<feature type="peptide" id="PRO_0000226964" description="Potassium channel toxin alpha-KTx 1.4" evidence="4">
    <location>
        <begin position="1"/>
        <end position="37"/>
    </location>
</feature>
<feature type="site" description="Basic residue of the functional dyad" evidence="1">
    <location>
        <position position="27"/>
    </location>
</feature>
<feature type="site" description="Aromatic residue of the functional dyad" evidence="1">
    <location>
        <position position="36"/>
    </location>
</feature>
<feature type="disulfide bond" evidence="1">
    <location>
        <begin position="7"/>
        <end position="28"/>
    </location>
</feature>
<feature type="disulfide bond" evidence="1">
    <location>
        <begin position="13"/>
        <end position="33"/>
    </location>
</feature>
<feature type="disulfide bond" evidence="1">
    <location>
        <begin position="17"/>
        <end position="35"/>
    </location>
</feature>
<evidence type="ECO:0000250" key="1"/>
<evidence type="ECO:0000250" key="2">
    <source>
        <dbReference type="UniProtKB" id="P0C182"/>
    </source>
</evidence>
<evidence type="ECO:0000269" key="3">
    <source ref="1"/>
</evidence>
<evidence type="ECO:0000303" key="4">
    <source ref="1"/>
</evidence>
<evidence type="ECO:0000305" key="5"/>
<evidence type="ECO:0000305" key="6">
    <source ref="1"/>
</evidence>
<name>KAX14_CENLM</name>
<dbReference type="GO" id="GO:0005576">
    <property type="term" value="C:extracellular region"/>
    <property type="evidence" value="ECO:0007669"/>
    <property type="project" value="UniProtKB-SubCell"/>
</dbReference>
<dbReference type="GO" id="GO:0008200">
    <property type="term" value="F:ion channel inhibitor activity"/>
    <property type="evidence" value="ECO:0007669"/>
    <property type="project" value="InterPro"/>
</dbReference>
<dbReference type="GO" id="GO:0015459">
    <property type="term" value="F:potassium channel regulator activity"/>
    <property type="evidence" value="ECO:0007669"/>
    <property type="project" value="UniProtKB-KW"/>
</dbReference>
<dbReference type="GO" id="GO:0090729">
    <property type="term" value="F:toxin activity"/>
    <property type="evidence" value="ECO:0007669"/>
    <property type="project" value="UniProtKB-KW"/>
</dbReference>
<dbReference type="Gene3D" id="3.30.30.10">
    <property type="entry name" value="Knottin, scorpion toxin-like"/>
    <property type="match status" value="1"/>
</dbReference>
<dbReference type="InterPro" id="IPR036574">
    <property type="entry name" value="Scorpion_toxin-like_sf"/>
</dbReference>
<dbReference type="InterPro" id="IPR001947">
    <property type="entry name" value="Scorpion_toxinS_K_inh"/>
</dbReference>
<dbReference type="Pfam" id="PF00451">
    <property type="entry name" value="Toxin_2"/>
    <property type="match status" value="1"/>
</dbReference>
<dbReference type="PRINTS" id="PR00286">
    <property type="entry name" value="CHARYBDTOXIN"/>
</dbReference>
<dbReference type="SUPFAM" id="SSF57095">
    <property type="entry name" value="Scorpion toxin-like"/>
    <property type="match status" value="1"/>
</dbReference>
<dbReference type="PROSITE" id="PS01138">
    <property type="entry name" value="SCORP_SHORT_TOXIN"/>
    <property type="match status" value="1"/>
</dbReference>
<protein>
    <recommendedName>
        <fullName>Potassium channel toxin alpha-KTx 1.4</fullName>
    </recommendedName>
    <alternativeName>
        <fullName>Limbatotoxin</fullName>
        <shortName>LbTx</shortName>
    </alternativeName>
    <alternativeName>
        <fullName>Limbatustoxin</fullName>
    </alternativeName>
</protein>
<sequence>VFIDVSCSVSKECWAPCKAAVGTDRGKCMGKKCRCYX</sequence>
<comment type="function">
    <text evidence="2">Blocks selectively the high conductance calcium-activated (maxi-K) potassium channels.</text>
</comment>
<comment type="subcellular location">
    <subcellularLocation>
        <location evidence="3">Secreted</location>
    </subcellularLocation>
</comment>
<comment type="tissue specificity">
    <text evidence="6">Expressed by the venom gland.</text>
</comment>
<comment type="domain">
    <text evidence="5">Has the structural arrangement of an alpha-helix connected to antiparallel beta-sheets by disulfide bonds (CS-alpha/beta).</text>
</comment>
<comment type="similarity">
    <text evidence="5">Belongs to the short scorpion toxin superfamily. Potassium channel inhibitor family. Alpha-KTx 01 subfamily.</text>
</comment>
<reference key="1">
    <citation type="journal article" date="1991" name="Biophys. J.">
        <title>Peptides and genes coding for scorpion toxins that affect ion-channels.</title>
        <authorList>
            <person name="Novick J."/>
            <person name="Leonard R.J."/>
            <person name="King V.F."/>
            <person name="Schmalhofer W."/>
            <person name="Kaczororowski G.J."/>
            <person name="Garcia M.L."/>
        </authorList>
    </citation>
    <scope>PROTEIN SEQUENCE</scope>
    <scope>SUBCELLULAR LOCATION</scope>
    <source>
        <tissue>Venom</tissue>
    </source>
</reference>